<protein>
    <recommendedName>
        <fullName evidence="2">Ceramide synthase</fullName>
        <ecNumber evidence="2">2.3.1.-</ecNumber>
    </recommendedName>
    <alternativeName>
        <fullName>Protein FAM57B</fullName>
    </alternativeName>
    <alternativeName>
        <fullName evidence="7">TLC domain-containing protein 3B</fullName>
    </alternativeName>
</protein>
<keyword id="KW-0877">Alternative promoter usage</keyword>
<keyword id="KW-0182">Cone-rod dystrophy</keyword>
<keyword id="KW-0225">Disease variant</keyword>
<keyword id="KW-0256">Endoplasmic reticulum</keyword>
<keyword id="KW-0333">Golgi apparatus</keyword>
<keyword id="KW-0444">Lipid biosynthesis</keyword>
<keyword id="KW-0443">Lipid metabolism</keyword>
<keyword id="KW-0472">Membrane</keyword>
<keyword id="KW-1267">Proteomics identification</keyword>
<keyword id="KW-1185">Reference proteome</keyword>
<keyword id="KW-0808">Transferase</keyword>
<keyword id="KW-0812">Transmembrane</keyword>
<keyword id="KW-1133">Transmembrane helix</keyword>
<accession>Q71RH2</accession>
<accession>Q9H0J1</accession>
<name>TLC3B_HUMAN</name>
<evidence type="ECO:0000250" key="1"/>
<evidence type="ECO:0000250" key="2">
    <source>
        <dbReference type="UniProtKB" id="Q7TNV1"/>
    </source>
</evidence>
<evidence type="ECO:0000255" key="3"/>
<evidence type="ECO:0000255" key="4">
    <source>
        <dbReference type="PROSITE-ProRule" id="PRU00205"/>
    </source>
</evidence>
<evidence type="ECO:0000269" key="5">
    <source>
    </source>
</evidence>
<evidence type="ECO:0000303" key="6">
    <source>
    </source>
</evidence>
<evidence type="ECO:0000305" key="7"/>
<evidence type="ECO:0000312" key="8">
    <source>
        <dbReference type="HGNC" id="HGNC:25295"/>
    </source>
</evidence>
<sequence>MLTPMVAGGVVFPGLFLLSKNTLQRLPQLRWEEADAVIVSARLVSSVQAIMASTAGYIVSTSCKHIIDDQHWLSSAYTQFAVPYFIYDIYAMFLCHWHKHQVKGHGGDDGAARAPGSTWAIARGYLHKEFLMVLHHAAMVLVCFPLSVVWRQGKGDFFLGCMLMAEVSTPFVCLGKILIQYKQQHTLLHKVNGALMLLSFLCCRVLLFPYLYWAYGRHAGLPLLAVPLAIPAHVNLGAALLLAPQLYWFFLICRGACRLFWPRSRPPPACQAQD</sequence>
<reference key="1">
    <citation type="journal article" date="2001" name="Genome Res.">
        <title>Towards a catalog of human genes and proteins: sequencing and analysis of 500 novel complete protein coding human cDNAs.</title>
        <authorList>
            <person name="Wiemann S."/>
            <person name="Weil B."/>
            <person name="Wellenreuther R."/>
            <person name="Gassenhuber J."/>
            <person name="Glassl S."/>
            <person name="Ansorge W."/>
            <person name="Boecher M."/>
            <person name="Bloecker H."/>
            <person name="Bauersachs S."/>
            <person name="Blum H."/>
            <person name="Lauber J."/>
            <person name="Duesterhoeft A."/>
            <person name="Beyer A."/>
            <person name="Koehrer K."/>
            <person name="Strack N."/>
            <person name="Mewes H.-W."/>
            <person name="Ottenwaelder B."/>
            <person name="Obermaier B."/>
            <person name="Tampe J."/>
            <person name="Heubner D."/>
            <person name="Wambutt R."/>
            <person name="Korn B."/>
            <person name="Klein M."/>
            <person name="Poustka A."/>
        </authorList>
    </citation>
    <scope>NUCLEOTIDE SEQUENCE [LARGE SCALE MRNA] (ISOFORM 2)</scope>
    <source>
        <tissue>Testis</tissue>
    </source>
</reference>
<reference key="2">
    <citation type="journal article" date="2004" name="Proc. Natl. Acad. Sci. U.S.A.">
        <title>Large-scale cDNA transfection screening for genes related to cancer development and progression.</title>
        <authorList>
            <person name="Wan D."/>
            <person name="Gong Y."/>
            <person name="Qin W."/>
            <person name="Zhang P."/>
            <person name="Li J."/>
            <person name="Wei L."/>
            <person name="Zhou X."/>
            <person name="Li H."/>
            <person name="Qiu X."/>
            <person name="Zhong F."/>
            <person name="He L."/>
            <person name="Yu J."/>
            <person name="Yao G."/>
            <person name="Jiang H."/>
            <person name="Qian L."/>
            <person name="Yu Y."/>
            <person name="Shu H."/>
            <person name="Chen X."/>
            <person name="Xu H."/>
            <person name="Guo M."/>
            <person name="Pan Z."/>
            <person name="Chen Y."/>
            <person name="Ge C."/>
            <person name="Yang S."/>
            <person name="Gu J."/>
        </authorList>
    </citation>
    <scope>NUCLEOTIDE SEQUENCE [LARGE SCALE MRNA] (ISOFORM 1)</scope>
</reference>
<reference key="3">
    <citation type="journal article" date="2004" name="Genome Res.">
        <title>The status, quality, and expansion of the NIH full-length cDNA project: the Mammalian Gene Collection (MGC).</title>
        <authorList>
            <consortium name="The MGC Project Team"/>
        </authorList>
    </citation>
    <scope>NUCLEOTIDE SEQUENCE [LARGE SCALE MRNA] (ISOFORM 1)</scope>
    <source>
        <tissue>Brain</tissue>
    </source>
</reference>
<reference key="4">
    <citation type="journal article" date="2021" name="Genet. Med.">
        <title>Ceramide synthase TLCD3B is a novel gene associated with human recessive retinal dystrophy.</title>
        <authorList>
            <person name="Bertrand R.E."/>
            <person name="Wang J."/>
            <person name="Xiong K.H."/>
            <person name="Thangavel C."/>
            <person name="Qian X."/>
            <person name="Ba-Abbad R."/>
            <person name="Liang Q."/>
            <person name="Simoes R.T."/>
            <person name="Sampaio S.A.M."/>
            <person name="Carss K.J."/>
            <person name="Lucy Raymond F."/>
            <person name="Robson A.G."/>
            <person name="Webster A.R."/>
            <person name="Arno G."/>
            <person name="Porto F.B.O."/>
            <person name="Chen R."/>
        </authorList>
    </citation>
    <scope>INVOLVEMENT IN CORD22</scope>
    <scope>VARIANT CORD22 SER-56</scope>
    <scope>TISSUE SPECIFICITY</scope>
</reference>
<proteinExistence type="evidence at protein level"/>
<dbReference type="EC" id="2.3.1.-" evidence="2"/>
<dbReference type="EMBL" id="AL136777">
    <property type="protein sequence ID" value="CAB66711.1"/>
    <property type="molecule type" value="mRNA"/>
</dbReference>
<dbReference type="EMBL" id="AF370365">
    <property type="protein sequence ID" value="AAQ15201.1"/>
    <property type="molecule type" value="mRNA"/>
</dbReference>
<dbReference type="EMBL" id="BC007892">
    <property type="protein sequence ID" value="AAH07892.2"/>
    <property type="molecule type" value="mRNA"/>
</dbReference>
<dbReference type="CCDS" id="CCDS10667.2">
    <molecule id="Q71RH2-1"/>
</dbReference>
<dbReference type="CCDS" id="CCDS81967.1">
    <molecule id="Q71RH2-2"/>
</dbReference>
<dbReference type="RefSeq" id="NP_001305433.1">
    <molecule id="Q71RH2-2"/>
    <property type="nucleotide sequence ID" value="NM_001318504.2"/>
</dbReference>
<dbReference type="RefSeq" id="NP_113666.2">
    <molecule id="Q71RH2-1"/>
    <property type="nucleotide sequence ID" value="NM_031478.6"/>
</dbReference>
<dbReference type="RefSeq" id="XP_016879242.1">
    <property type="nucleotide sequence ID" value="XM_017023753.1"/>
</dbReference>
<dbReference type="RefSeq" id="XP_016879243.1">
    <molecule id="Q71RH2-2"/>
    <property type="nucleotide sequence ID" value="XM_017023754.2"/>
</dbReference>
<dbReference type="RefSeq" id="XP_024306234.1">
    <molecule id="Q71RH2-2"/>
    <property type="nucleotide sequence ID" value="XM_024450466.2"/>
</dbReference>
<dbReference type="RefSeq" id="XP_054170077.1">
    <molecule id="Q71RH2-2"/>
    <property type="nucleotide sequence ID" value="XM_054314102.1"/>
</dbReference>
<dbReference type="RefSeq" id="XP_054170078.1">
    <molecule id="Q71RH2-2"/>
    <property type="nucleotide sequence ID" value="XM_054314103.1"/>
</dbReference>
<dbReference type="BioGRID" id="123741">
    <property type="interactions" value="4"/>
</dbReference>
<dbReference type="FunCoup" id="Q71RH2">
    <property type="interactions" value="484"/>
</dbReference>
<dbReference type="IntAct" id="Q71RH2">
    <property type="interactions" value="1"/>
</dbReference>
<dbReference type="STRING" id="9606.ENSP00000369863"/>
<dbReference type="iPTMnet" id="Q71RH2"/>
<dbReference type="PhosphoSitePlus" id="Q71RH2"/>
<dbReference type="BioMuta" id="FAM57B"/>
<dbReference type="DMDM" id="62510682"/>
<dbReference type="MassIVE" id="Q71RH2"/>
<dbReference type="PaxDb" id="9606-ENSP00000369863"/>
<dbReference type="PeptideAtlas" id="Q71RH2"/>
<dbReference type="ProteomicsDB" id="68621">
    <molecule id="Q71RH2-1"/>
</dbReference>
<dbReference type="ProteomicsDB" id="68622">
    <molecule id="Q71RH2-2"/>
</dbReference>
<dbReference type="Antibodypedia" id="26964">
    <property type="antibodies" value="28 antibodies from 15 providers"/>
</dbReference>
<dbReference type="DNASU" id="83723"/>
<dbReference type="Ensembl" id="ENST00000279389.8">
    <molecule id="Q71RH2-2"/>
    <property type="protein sequence ID" value="ENSP00000279389.4"/>
    <property type="gene ID" value="ENSG00000149926.14"/>
</dbReference>
<dbReference type="Ensembl" id="ENST00000380495.9">
    <molecule id="Q71RH2-1"/>
    <property type="protein sequence ID" value="ENSP00000369863.4"/>
    <property type="gene ID" value="ENSG00000149926.14"/>
</dbReference>
<dbReference type="GeneID" id="83723"/>
<dbReference type="KEGG" id="hsa:83723"/>
<dbReference type="MANE-Select" id="ENST00000380495.9">
    <property type="protein sequence ID" value="ENSP00000369863.4"/>
    <property type="RefSeq nucleotide sequence ID" value="NM_031478.6"/>
    <property type="RefSeq protein sequence ID" value="NP_113666.2"/>
</dbReference>
<dbReference type="UCSC" id="uc002dvt.4">
    <molecule id="Q71RH2-1"/>
    <property type="organism name" value="human"/>
</dbReference>
<dbReference type="AGR" id="HGNC:25295"/>
<dbReference type="CTD" id="83723"/>
<dbReference type="DisGeNET" id="83723"/>
<dbReference type="GeneCards" id="TLCD3B"/>
<dbReference type="HGNC" id="HGNC:25295">
    <property type="gene designation" value="TLCD3B"/>
</dbReference>
<dbReference type="HPA" id="ENSG00000149926">
    <property type="expression patterns" value="Group enriched (brain, retina, testis)"/>
</dbReference>
<dbReference type="MalaCards" id="TLCD3B"/>
<dbReference type="MIM" id="615175">
    <property type="type" value="gene"/>
</dbReference>
<dbReference type="MIM" id="619531">
    <property type="type" value="phenotype"/>
</dbReference>
<dbReference type="neXtProt" id="NX_Q71RH2"/>
<dbReference type="OpenTargets" id="ENSG00000149926"/>
<dbReference type="Orphanet" id="1872">
    <property type="disease" value="Cone rod dystrophy"/>
</dbReference>
<dbReference type="VEuPathDB" id="HostDB:ENSG00000149926"/>
<dbReference type="eggNOG" id="KOG4561">
    <property type="taxonomic scope" value="Eukaryota"/>
</dbReference>
<dbReference type="GeneTree" id="ENSGT01010000222313"/>
<dbReference type="HOGENOM" id="CLU_049796_0_0_1"/>
<dbReference type="InParanoid" id="Q71RH2"/>
<dbReference type="OMA" id="WLRWEEA"/>
<dbReference type="OrthoDB" id="10266980at2759"/>
<dbReference type="PAN-GO" id="Q71RH2">
    <property type="GO annotations" value="4 GO annotations based on evolutionary models"/>
</dbReference>
<dbReference type="PhylomeDB" id="Q71RH2"/>
<dbReference type="TreeFam" id="TF350344"/>
<dbReference type="PathwayCommons" id="Q71RH2"/>
<dbReference type="SIGNOR" id="Q71RH2"/>
<dbReference type="BioGRID-ORCS" id="83723">
    <property type="hits" value="34 hits in 1170 CRISPR screens"/>
</dbReference>
<dbReference type="GeneWiki" id="FAM57B"/>
<dbReference type="GenomeRNAi" id="83723"/>
<dbReference type="Pharos" id="Q71RH2">
    <property type="development level" value="Tdark"/>
</dbReference>
<dbReference type="PRO" id="PR:Q71RH2"/>
<dbReference type="Proteomes" id="UP000005640">
    <property type="component" value="Chromosome 16"/>
</dbReference>
<dbReference type="RNAct" id="Q71RH2">
    <property type="molecule type" value="protein"/>
</dbReference>
<dbReference type="Bgee" id="ENSG00000149926">
    <property type="expression patterns" value="Expressed in left testis and 152 other cell types or tissues"/>
</dbReference>
<dbReference type="ExpressionAtlas" id="Q71RH2">
    <property type="expression patterns" value="baseline and differential"/>
</dbReference>
<dbReference type="GO" id="GO:0005783">
    <property type="term" value="C:endoplasmic reticulum"/>
    <property type="evidence" value="ECO:0000314"/>
    <property type="project" value="LIFEdb"/>
</dbReference>
<dbReference type="GO" id="GO:0005789">
    <property type="term" value="C:endoplasmic reticulum membrane"/>
    <property type="evidence" value="ECO:0007669"/>
    <property type="project" value="UniProtKB-SubCell"/>
</dbReference>
<dbReference type="GO" id="GO:0000139">
    <property type="term" value="C:Golgi membrane"/>
    <property type="evidence" value="ECO:0007669"/>
    <property type="project" value="UniProtKB-SubCell"/>
</dbReference>
<dbReference type="GO" id="GO:0050291">
    <property type="term" value="F:sphingosine N-acyltransferase activity"/>
    <property type="evidence" value="ECO:0000318"/>
    <property type="project" value="GO_Central"/>
</dbReference>
<dbReference type="GO" id="GO:0046513">
    <property type="term" value="P:ceramide biosynthetic process"/>
    <property type="evidence" value="ECO:0000318"/>
    <property type="project" value="GO_Central"/>
</dbReference>
<dbReference type="GO" id="GO:0055088">
    <property type="term" value="P:lipid homeostasis"/>
    <property type="evidence" value="ECO:0000318"/>
    <property type="project" value="GO_Central"/>
</dbReference>
<dbReference type="GO" id="GO:0045599">
    <property type="term" value="P:negative regulation of fat cell differentiation"/>
    <property type="evidence" value="ECO:0007669"/>
    <property type="project" value="Ensembl"/>
</dbReference>
<dbReference type="InterPro" id="IPR006634">
    <property type="entry name" value="TLC-dom"/>
</dbReference>
<dbReference type="InterPro" id="IPR050846">
    <property type="entry name" value="TLCD"/>
</dbReference>
<dbReference type="PANTHER" id="PTHR13439:SF15">
    <property type="entry name" value="CERAMIDE SYNTHASE"/>
    <property type="match status" value="1"/>
</dbReference>
<dbReference type="PANTHER" id="PTHR13439">
    <property type="entry name" value="CT120 PROTEIN"/>
    <property type="match status" value="1"/>
</dbReference>
<dbReference type="Pfam" id="PF03798">
    <property type="entry name" value="TRAM_LAG1_CLN8"/>
    <property type="match status" value="1"/>
</dbReference>
<dbReference type="SMART" id="SM00724">
    <property type="entry name" value="TLC"/>
    <property type="match status" value="1"/>
</dbReference>
<dbReference type="PROSITE" id="PS50922">
    <property type="entry name" value="TLC"/>
    <property type="match status" value="1"/>
</dbReference>
<organism>
    <name type="scientific">Homo sapiens</name>
    <name type="common">Human</name>
    <dbReference type="NCBI Taxonomy" id="9606"/>
    <lineage>
        <taxon>Eukaryota</taxon>
        <taxon>Metazoa</taxon>
        <taxon>Chordata</taxon>
        <taxon>Craniata</taxon>
        <taxon>Vertebrata</taxon>
        <taxon>Euteleostomi</taxon>
        <taxon>Mammalia</taxon>
        <taxon>Eutheria</taxon>
        <taxon>Euarchontoglires</taxon>
        <taxon>Primates</taxon>
        <taxon>Haplorrhini</taxon>
        <taxon>Catarrhini</taxon>
        <taxon>Hominidae</taxon>
        <taxon>Homo</taxon>
    </lineage>
</organism>
<comment type="function">
    <text evidence="1">Involved in ceramide synthesis.</text>
</comment>
<comment type="catalytic activity">
    <reaction evidence="2">
        <text>sphing-4-enine + octadecanoyl-CoA = N-octadecanoylsphing-4-enine + CoA + H(+)</text>
        <dbReference type="Rhea" id="RHEA:36691"/>
        <dbReference type="ChEBI" id="CHEBI:15378"/>
        <dbReference type="ChEBI" id="CHEBI:57287"/>
        <dbReference type="ChEBI" id="CHEBI:57394"/>
        <dbReference type="ChEBI" id="CHEBI:57756"/>
        <dbReference type="ChEBI" id="CHEBI:72961"/>
    </reaction>
</comment>
<comment type="catalytic activity">
    <reaction evidence="2">
        <text>eicosanoyl-CoA + sphing-4-enine = N-eicosanoyl-sphing-4-enine + CoA + H(+)</text>
        <dbReference type="Rhea" id="RHEA:45284"/>
        <dbReference type="ChEBI" id="CHEBI:15378"/>
        <dbReference type="ChEBI" id="CHEBI:57287"/>
        <dbReference type="ChEBI" id="CHEBI:57380"/>
        <dbReference type="ChEBI" id="CHEBI:57756"/>
        <dbReference type="ChEBI" id="CHEBI:72962"/>
    </reaction>
</comment>
<comment type="catalytic activity">
    <reaction evidence="2">
        <text>sphing-4-enine + hexadecanoyl-CoA = N-hexadecanoylsphing-4-enine + CoA + H(+)</text>
        <dbReference type="Rhea" id="RHEA:36687"/>
        <dbReference type="ChEBI" id="CHEBI:15378"/>
        <dbReference type="ChEBI" id="CHEBI:57287"/>
        <dbReference type="ChEBI" id="CHEBI:57379"/>
        <dbReference type="ChEBI" id="CHEBI:57756"/>
        <dbReference type="ChEBI" id="CHEBI:72959"/>
    </reaction>
</comment>
<comment type="subcellular location">
    <molecule>Isoform 1</molecule>
    <subcellularLocation>
        <location evidence="2">Golgi apparatus membrane</location>
        <topology evidence="3">Multi-pass membrane protein</topology>
    </subcellularLocation>
</comment>
<comment type="subcellular location">
    <molecule>Isoform 2</molecule>
    <subcellularLocation>
        <location evidence="2">Endoplasmic reticulum membrane</location>
        <topology evidence="3">Multi-pass membrane protein</topology>
    </subcellularLocation>
</comment>
<comment type="alternative products">
    <event type="alternative promoter"/>
    <isoform>
        <id>Q71RH2-1</id>
        <name>1</name>
        <sequence type="displayed"/>
    </isoform>
    <isoform>
        <id>Q71RH2-2</id>
        <name>2</name>
        <sequence type="described" ref="VSP_013343"/>
    </isoform>
</comment>
<comment type="tissue specificity">
    <text evidence="5">Expressed in testis (PubMed:33077892). Expressed in the retina with higher expression levels in the macular than in the peripheral region (PubMed:33077892).</text>
</comment>
<comment type="disease" evidence="5">
    <disease id="DI-06228">
        <name>Cone-rod dystrophy 22</name>
        <acronym>CORD22</acronym>
        <description>An autosomal recessive form of cone-rod dystrophy, an inherited retinal dystrophy characterized by retinal pigment deposits visible on fundus examination, predominantly in the macular region, and initial loss of cone photoreceptors followed by rod degeneration. This leads to decreased visual acuity and sensitivity in the central visual field, followed by loss of peripheral vision. Severe loss of vision occurs earlier than in retinitis pigmentosa, due to cone photoreceptors degenerating at a higher rate than rod photoreceptors.</description>
        <dbReference type="MIM" id="619531"/>
    </disease>
    <text>The disease may be caused by variants affecting distinct genetic loci, including the gene represented in this entry.</text>
</comment>
<feature type="chain" id="PRO_0000185542" description="Ceramide synthase">
    <location>
        <begin position="1"/>
        <end position="274"/>
    </location>
</feature>
<feature type="transmembrane region" description="Helical" evidence="3">
    <location>
        <begin position="130"/>
        <end position="150"/>
    </location>
</feature>
<feature type="transmembrane region" description="Helical" evidence="3">
    <location>
        <begin position="159"/>
        <end position="179"/>
    </location>
</feature>
<feature type="transmembrane region" description="Helical" evidence="3">
    <location>
        <begin position="194"/>
        <end position="214"/>
    </location>
</feature>
<feature type="transmembrane region" description="Helical" evidence="3">
    <location>
        <begin position="223"/>
        <end position="243"/>
    </location>
</feature>
<feature type="domain" description="TLC" evidence="4">
    <location>
        <begin position="34"/>
        <end position="261"/>
    </location>
</feature>
<feature type="splice variant" id="VSP_013343" description="In isoform 2." evidence="6">
    <location>
        <begin position="1"/>
        <end position="50"/>
    </location>
</feature>
<feature type="sequence variant" id="VAR_086272" description="In CORD22; uncertain significance; dbSNP:rs745587834." evidence="5">
    <original>G</original>
    <variation>S</variation>
    <location>
        <position position="56"/>
    </location>
</feature>
<gene>
    <name evidence="8" type="primary">TLCD3B</name>
    <name type="synonym">FAM57B</name>
    <name type="ORF">FP1188</name>
</gene>